<proteinExistence type="inferred from homology"/>
<gene>
    <name evidence="1" type="primary">der</name>
    <name type="synonym">engA</name>
    <name type="ordered locus">CLD_2116</name>
</gene>
<evidence type="ECO:0000255" key="1">
    <source>
        <dbReference type="HAMAP-Rule" id="MF_00195"/>
    </source>
</evidence>
<keyword id="KW-0342">GTP-binding</keyword>
<keyword id="KW-0547">Nucleotide-binding</keyword>
<keyword id="KW-0677">Repeat</keyword>
<keyword id="KW-0690">Ribosome biogenesis</keyword>
<organism>
    <name type="scientific">Clostridium botulinum (strain Okra / Type B1)</name>
    <dbReference type="NCBI Taxonomy" id="498213"/>
    <lineage>
        <taxon>Bacteria</taxon>
        <taxon>Bacillati</taxon>
        <taxon>Bacillota</taxon>
        <taxon>Clostridia</taxon>
        <taxon>Eubacteriales</taxon>
        <taxon>Clostridiaceae</taxon>
        <taxon>Clostridium</taxon>
    </lineage>
</organism>
<accession>B1IIN2</accession>
<feature type="chain" id="PRO_1000099109" description="GTPase Der">
    <location>
        <begin position="1"/>
        <end position="439"/>
    </location>
</feature>
<feature type="domain" description="EngA-type G 1">
    <location>
        <begin position="4"/>
        <end position="168"/>
    </location>
</feature>
<feature type="domain" description="EngA-type G 2">
    <location>
        <begin position="177"/>
        <end position="352"/>
    </location>
</feature>
<feature type="domain" description="KH-like" evidence="1">
    <location>
        <begin position="353"/>
        <end position="437"/>
    </location>
</feature>
<feature type="binding site" evidence="1">
    <location>
        <begin position="10"/>
        <end position="17"/>
    </location>
    <ligand>
        <name>GTP</name>
        <dbReference type="ChEBI" id="CHEBI:37565"/>
        <label>1</label>
    </ligand>
</feature>
<feature type="binding site" evidence="1">
    <location>
        <begin position="57"/>
        <end position="61"/>
    </location>
    <ligand>
        <name>GTP</name>
        <dbReference type="ChEBI" id="CHEBI:37565"/>
        <label>1</label>
    </ligand>
</feature>
<feature type="binding site" evidence="1">
    <location>
        <begin position="120"/>
        <end position="123"/>
    </location>
    <ligand>
        <name>GTP</name>
        <dbReference type="ChEBI" id="CHEBI:37565"/>
        <label>1</label>
    </ligand>
</feature>
<feature type="binding site" evidence="1">
    <location>
        <begin position="183"/>
        <end position="190"/>
    </location>
    <ligand>
        <name>GTP</name>
        <dbReference type="ChEBI" id="CHEBI:37565"/>
        <label>2</label>
    </ligand>
</feature>
<feature type="binding site" evidence="1">
    <location>
        <begin position="230"/>
        <end position="234"/>
    </location>
    <ligand>
        <name>GTP</name>
        <dbReference type="ChEBI" id="CHEBI:37565"/>
        <label>2</label>
    </ligand>
</feature>
<feature type="binding site" evidence="1">
    <location>
        <begin position="295"/>
        <end position="298"/>
    </location>
    <ligand>
        <name>GTP</name>
        <dbReference type="ChEBI" id="CHEBI:37565"/>
        <label>2</label>
    </ligand>
</feature>
<dbReference type="EMBL" id="CP000939">
    <property type="protein sequence ID" value="ACA46079.1"/>
    <property type="molecule type" value="Genomic_DNA"/>
</dbReference>
<dbReference type="RefSeq" id="WP_003402212.1">
    <property type="nucleotide sequence ID" value="NC_010516.1"/>
</dbReference>
<dbReference type="SMR" id="B1IIN2"/>
<dbReference type="KEGG" id="cbb:CLD_2116"/>
<dbReference type="HOGENOM" id="CLU_016077_6_2_9"/>
<dbReference type="Proteomes" id="UP000008541">
    <property type="component" value="Chromosome"/>
</dbReference>
<dbReference type="GO" id="GO:0016887">
    <property type="term" value="F:ATP hydrolysis activity"/>
    <property type="evidence" value="ECO:0007669"/>
    <property type="project" value="InterPro"/>
</dbReference>
<dbReference type="GO" id="GO:0005525">
    <property type="term" value="F:GTP binding"/>
    <property type="evidence" value="ECO:0007669"/>
    <property type="project" value="UniProtKB-UniRule"/>
</dbReference>
<dbReference type="GO" id="GO:0043022">
    <property type="term" value="F:ribosome binding"/>
    <property type="evidence" value="ECO:0007669"/>
    <property type="project" value="TreeGrafter"/>
</dbReference>
<dbReference type="GO" id="GO:0042254">
    <property type="term" value="P:ribosome biogenesis"/>
    <property type="evidence" value="ECO:0007669"/>
    <property type="project" value="UniProtKB-KW"/>
</dbReference>
<dbReference type="CDD" id="cd01894">
    <property type="entry name" value="EngA1"/>
    <property type="match status" value="1"/>
</dbReference>
<dbReference type="CDD" id="cd01895">
    <property type="entry name" value="EngA2"/>
    <property type="match status" value="1"/>
</dbReference>
<dbReference type="FunFam" id="3.30.300.20:FF:000004">
    <property type="entry name" value="GTPase Der"/>
    <property type="match status" value="1"/>
</dbReference>
<dbReference type="FunFam" id="3.40.50.300:FF:000040">
    <property type="entry name" value="GTPase Der"/>
    <property type="match status" value="1"/>
</dbReference>
<dbReference type="FunFam" id="3.40.50.300:FF:000057">
    <property type="entry name" value="GTPase Der"/>
    <property type="match status" value="1"/>
</dbReference>
<dbReference type="Gene3D" id="3.30.300.20">
    <property type="match status" value="1"/>
</dbReference>
<dbReference type="Gene3D" id="3.40.50.300">
    <property type="entry name" value="P-loop containing nucleotide triphosphate hydrolases"/>
    <property type="match status" value="2"/>
</dbReference>
<dbReference type="HAMAP" id="MF_00195">
    <property type="entry name" value="GTPase_Der"/>
    <property type="match status" value="1"/>
</dbReference>
<dbReference type="InterPro" id="IPR003593">
    <property type="entry name" value="AAA+_ATPase"/>
</dbReference>
<dbReference type="InterPro" id="IPR031166">
    <property type="entry name" value="G_ENGA"/>
</dbReference>
<dbReference type="InterPro" id="IPR006073">
    <property type="entry name" value="GTP-bd"/>
</dbReference>
<dbReference type="InterPro" id="IPR016484">
    <property type="entry name" value="GTPase_Der"/>
</dbReference>
<dbReference type="InterPro" id="IPR032859">
    <property type="entry name" value="KH_dom-like"/>
</dbReference>
<dbReference type="InterPro" id="IPR015946">
    <property type="entry name" value="KH_dom-like_a/b"/>
</dbReference>
<dbReference type="InterPro" id="IPR027417">
    <property type="entry name" value="P-loop_NTPase"/>
</dbReference>
<dbReference type="InterPro" id="IPR005225">
    <property type="entry name" value="Small_GTP-bd"/>
</dbReference>
<dbReference type="NCBIfam" id="TIGR03594">
    <property type="entry name" value="GTPase_EngA"/>
    <property type="match status" value="1"/>
</dbReference>
<dbReference type="NCBIfam" id="TIGR00231">
    <property type="entry name" value="small_GTP"/>
    <property type="match status" value="2"/>
</dbReference>
<dbReference type="PANTHER" id="PTHR43834">
    <property type="entry name" value="GTPASE DER"/>
    <property type="match status" value="1"/>
</dbReference>
<dbReference type="PANTHER" id="PTHR43834:SF6">
    <property type="entry name" value="GTPASE DER"/>
    <property type="match status" value="1"/>
</dbReference>
<dbReference type="Pfam" id="PF14714">
    <property type="entry name" value="KH_dom-like"/>
    <property type="match status" value="1"/>
</dbReference>
<dbReference type="Pfam" id="PF01926">
    <property type="entry name" value="MMR_HSR1"/>
    <property type="match status" value="2"/>
</dbReference>
<dbReference type="PIRSF" id="PIRSF006485">
    <property type="entry name" value="GTP-binding_EngA"/>
    <property type="match status" value="1"/>
</dbReference>
<dbReference type="PRINTS" id="PR00326">
    <property type="entry name" value="GTP1OBG"/>
</dbReference>
<dbReference type="SMART" id="SM00382">
    <property type="entry name" value="AAA"/>
    <property type="match status" value="2"/>
</dbReference>
<dbReference type="SUPFAM" id="SSF52540">
    <property type="entry name" value="P-loop containing nucleoside triphosphate hydrolases"/>
    <property type="match status" value="2"/>
</dbReference>
<dbReference type="PROSITE" id="PS51712">
    <property type="entry name" value="G_ENGA"/>
    <property type="match status" value="2"/>
</dbReference>
<reference key="1">
    <citation type="journal article" date="2007" name="PLoS ONE">
        <title>Analysis of the neurotoxin complex genes in Clostridium botulinum A1-A4 and B1 strains: BoNT/A3, /Ba4 and /B1 clusters are located within plasmids.</title>
        <authorList>
            <person name="Smith T.J."/>
            <person name="Hill K.K."/>
            <person name="Foley B.T."/>
            <person name="Detter J.C."/>
            <person name="Munk A.C."/>
            <person name="Bruce D.C."/>
            <person name="Doggett N.A."/>
            <person name="Smith L.A."/>
            <person name="Marks J.D."/>
            <person name="Xie G."/>
            <person name="Brettin T.S."/>
        </authorList>
    </citation>
    <scope>NUCLEOTIDE SEQUENCE [LARGE SCALE GENOMIC DNA]</scope>
    <source>
        <strain>Okra / Type B1</strain>
    </source>
</reference>
<sequence>MGKPIVAIVGRPNVGKSTLFNKLAGKRIAIVQDTPGVTRDRIYAEAEWLNYKFTMIDTGGIEPESEDIIVSQMRRQAQIAIEMANVIIFLVDGKEGLAPADEEVAQMLRKSKKPVVLVVNKIDKLKDENNAYEFYNLGIGDPVTISSSQALGLGDMLDRVVEYFKDDELDGEEDERINIAFIGKPNVGKSSLINKLLGEERLIVSDIPGTTRDSIDSYVDTEFGEFTLIDTAGLRRKSKVKEEIERYSVIRTYASIERADVCILMIDATEGISEQDQKIIGYAHDINKAILVIVNKWDLVEKDDKTMDKFKKELKVNLSFMPYAKYLFISAKTGQRVVKVLQTAKECYDNYTKRVKTGVLNDVISQAIMMKEPPIVGTKRLKIYYVTQIGTKPPTFIFFVNDPACIHFSYQRYLENQLRENFDFQGTGIKLEFRERKEK</sequence>
<name>DER_CLOBK</name>
<protein>
    <recommendedName>
        <fullName evidence="1">GTPase Der</fullName>
    </recommendedName>
    <alternativeName>
        <fullName evidence="1">GTP-binding protein EngA</fullName>
    </alternativeName>
</protein>
<comment type="function">
    <text evidence="1">GTPase that plays an essential role in the late steps of ribosome biogenesis.</text>
</comment>
<comment type="subunit">
    <text evidence="1">Associates with the 50S ribosomal subunit.</text>
</comment>
<comment type="similarity">
    <text evidence="1">Belongs to the TRAFAC class TrmE-Era-EngA-EngB-Septin-like GTPase superfamily. EngA (Der) GTPase family.</text>
</comment>